<comment type="function">
    <text>Responsible for the proteolytic maturation of the alpha-factor precursor.</text>
</comment>
<comment type="subcellular location">
    <subcellularLocation>
        <location>Vacuole membrane</location>
        <topology>Single-pass type II membrane protein</topology>
    </subcellularLocation>
    <text>Lysosome-like vacuoles.</text>
</comment>
<comment type="similarity">
    <text evidence="4">Belongs to the peptidase S9B family.</text>
</comment>
<accession>P33894</accession>
<accession>D6W2S4</accession>
<accession>Q9URF1</accession>
<gene>
    <name type="primary">STE13</name>
    <name type="synonym">YCI1</name>
    <name type="ordered locus">YOR219C</name>
    <name type="ORF">YOR50-9</name>
</gene>
<reference key="1">
    <citation type="journal article" date="1994" name="Yeast">
        <title>Isolation and DNA sequence of the STE13 gene encoding dipeptidyl aminopeptidase.</title>
        <authorList>
            <person name="Anna-Arriola S.S."/>
            <person name="Herskowitz I."/>
        </authorList>
    </citation>
    <scope>NUCLEOTIDE SEQUENCE [GENOMIC DNA]</scope>
</reference>
<reference key="2">
    <citation type="book" date="1994" name="Guidebook to the yeast secretory pathway">
        <title>STE13.</title>
        <editorList>
            <person name="Gething M.-J."/>
            <person name="Novick P."/>
            <person name="Stevens T.H."/>
            <person name="Rothblatt J."/>
        </editorList>
        <authorList>
            <person name="Flanagan C.A."/>
            <person name="Thorner J."/>
        </authorList>
    </citation>
    <scope>NUCLEOTIDE SEQUENCE</scope>
    <source>
        <strain>ATCC 204510 / AB320</strain>
    </source>
</reference>
<reference key="3">
    <citation type="journal article" date="1996" name="Yeast">
        <title>Sequence and analysis of a 33 kb fragment from the right arm of chromosome XV of the yeast Saccharomyces cerevisiae.</title>
        <authorList>
            <person name="Galisson F."/>
            <person name="Dujon B."/>
        </authorList>
    </citation>
    <scope>NUCLEOTIDE SEQUENCE [GENOMIC DNA]</scope>
    <source>
        <strain>ATCC 96604 / S288c / FY1679</strain>
    </source>
</reference>
<reference key="4">
    <citation type="journal article" date="1997" name="Nature">
        <title>The nucleotide sequence of Saccharomyces cerevisiae chromosome XV.</title>
        <authorList>
            <person name="Dujon B."/>
            <person name="Albermann K."/>
            <person name="Aldea M."/>
            <person name="Alexandraki D."/>
            <person name="Ansorge W."/>
            <person name="Arino J."/>
            <person name="Benes V."/>
            <person name="Bohn C."/>
            <person name="Bolotin-Fukuhara M."/>
            <person name="Bordonne R."/>
            <person name="Boyer J."/>
            <person name="Camasses A."/>
            <person name="Casamayor A."/>
            <person name="Casas C."/>
            <person name="Cheret G."/>
            <person name="Cziepluch C."/>
            <person name="Daignan-Fornier B."/>
            <person name="Dang V.-D."/>
            <person name="de Haan M."/>
            <person name="Delius H."/>
            <person name="Durand P."/>
            <person name="Fairhead C."/>
            <person name="Feldmann H."/>
            <person name="Gaillon L."/>
            <person name="Galisson F."/>
            <person name="Gamo F.-J."/>
            <person name="Gancedo C."/>
            <person name="Goffeau A."/>
            <person name="Goulding S.E."/>
            <person name="Grivell L.A."/>
            <person name="Habbig B."/>
            <person name="Hand N.J."/>
            <person name="Hani J."/>
            <person name="Hattenhorst U."/>
            <person name="Hebling U."/>
            <person name="Hernando Y."/>
            <person name="Herrero E."/>
            <person name="Heumann K."/>
            <person name="Hiesel R."/>
            <person name="Hilger F."/>
            <person name="Hofmann B."/>
            <person name="Hollenberg C.P."/>
            <person name="Hughes B."/>
            <person name="Jauniaux J.-C."/>
            <person name="Kalogeropoulos A."/>
            <person name="Katsoulou C."/>
            <person name="Kordes E."/>
            <person name="Lafuente M.J."/>
            <person name="Landt O."/>
            <person name="Louis E.J."/>
            <person name="Maarse A.C."/>
            <person name="Madania A."/>
            <person name="Mannhaupt G."/>
            <person name="Marck C."/>
            <person name="Martin R.P."/>
            <person name="Mewes H.-W."/>
            <person name="Michaux G."/>
            <person name="Paces V."/>
            <person name="Parle-McDermott A.G."/>
            <person name="Pearson B.M."/>
            <person name="Perrin A."/>
            <person name="Pettersson B."/>
            <person name="Poch O."/>
            <person name="Pohl T.M."/>
            <person name="Poirey R."/>
            <person name="Portetelle D."/>
            <person name="Pujol A."/>
            <person name="Purnelle B."/>
            <person name="Ramezani Rad M."/>
            <person name="Rechmann S."/>
            <person name="Schwager C."/>
            <person name="Schweizer M."/>
            <person name="Sor F."/>
            <person name="Sterky F."/>
            <person name="Tarassov I.A."/>
            <person name="Teodoru C."/>
            <person name="Tettelin H."/>
            <person name="Thierry A."/>
            <person name="Tobiasch E."/>
            <person name="Tzermia M."/>
            <person name="Uhlen M."/>
            <person name="Unseld M."/>
            <person name="Valens M."/>
            <person name="Vandenbol M."/>
            <person name="Vetter I."/>
            <person name="Vlcek C."/>
            <person name="Voet M."/>
            <person name="Volckaert G."/>
            <person name="Voss H."/>
            <person name="Wambutt R."/>
            <person name="Wedler H."/>
            <person name="Wiemann S."/>
            <person name="Winsor B."/>
            <person name="Wolfe K.H."/>
            <person name="Zollner A."/>
            <person name="Zumstein E."/>
            <person name="Kleine K."/>
        </authorList>
    </citation>
    <scope>NUCLEOTIDE SEQUENCE [LARGE SCALE GENOMIC DNA]</scope>
    <source>
        <strain>ATCC 204508 / S288c</strain>
    </source>
</reference>
<reference key="5">
    <citation type="journal article" date="2014" name="G3 (Bethesda)">
        <title>The reference genome sequence of Saccharomyces cerevisiae: Then and now.</title>
        <authorList>
            <person name="Engel S.R."/>
            <person name="Dietrich F.S."/>
            <person name="Fisk D.G."/>
            <person name="Binkley G."/>
            <person name="Balakrishnan R."/>
            <person name="Costanzo M.C."/>
            <person name="Dwight S.S."/>
            <person name="Hitz B.C."/>
            <person name="Karra K."/>
            <person name="Nash R.S."/>
            <person name="Weng S."/>
            <person name="Wong E.D."/>
            <person name="Lloyd P."/>
            <person name="Skrzypek M.S."/>
            <person name="Miyasato S.R."/>
            <person name="Simison M."/>
            <person name="Cherry J.M."/>
        </authorList>
    </citation>
    <scope>GENOME REANNOTATION</scope>
    <source>
        <strain>ATCC 204508 / S288c</strain>
    </source>
</reference>
<reference key="6">
    <citation type="journal article" date="1993" name="J. Cell Biol.">
        <title>Membrane protein retention in the yeast Golgi apparatus: dipeptidyl aminopeptidase A is retained by a cytoplasmic signal containing aromatic residues.</title>
        <authorList>
            <person name="Nothwehr S.F."/>
            <person name="Roberts C.J."/>
            <person name="Stevens T.H."/>
        </authorList>
    </citation>
    <scope>NUCLEOTIDE SEQUENCE OF 1-119</scope>
</reference>
<reference key="7">
    <citation type="journal article" date="2007" name="Proc. Natl. Acad. Sci. U.S.A.">
        <title>Analysis of phosphorylation sites on proteins from Saccharomyces cerevisiae by electron transfer dissociation (ETD) mass spectrometry.</title>
        <authorList>
            <person name="Chi A."/>
            <person name="Huttenhower C."/>
            <person name="Geer L.Y."/>
            <person name="Coon J.J."/>
            <person name="Syka J.E.P."/>
            <person name="Bai D.L."/>
            <person name="Shabanowitz J."/>
            <person name="Burke D.J."/>
            <person name="Troyanskaya O.G."/>
            <person name="Hunt D.F."/>
        </authorList>
    </citation>
    <scope>IDENTIFICATION BY MASS SPECTROMETRY [LARGE SCALE ANALYSIS]</scope>
</reference>
<feature type="chain" id="PRO_0000122420" description="Dipeptidyl aminopeptidase A">
    <location>
        <begin position="1"/>
        <end position="931"/>
    </location>
</feature>
<feature type="topological domain" description="Cytoplasmic" evidence="2">
    <location>
        <begin position="1"/>
        <end position="119"/>
    </location>
</feature>
<feature type="transmembrane region" description="Helical; Signal-anchor for type II membrane protein">
    <location>
        <begin position="120"/>
        <end position="140"/>
    </location>
</feature>
<feature type="topological domain" description="Lumenal" evidence="2">
    <location>
        <begin position="141"/>
        <end position="931"/>
    </location>
</feature>
<feature type="region of interest" description="Disordered" evidence="3">
    <location>
        <begin position="1"/>
        <end position="58"/>
    </location>
</feature>
<feature type="compositionally biased region" description="Basic residues" evidence="3">
    <location>
        <begin position="1"/>
        <end position="13"/>
    </location>
</feature>
<feature type="compositionally biased region" description="Polar residues" evidence="3">
    <location>
        <begin position="33"/>
        <end position="50"/>
    </location>
</feature>
<feature type="active site" description="Charge relay system" evidence="1">
    <location>
        <position position="785"/>
    </location>
</feature>
<feature type="active site" description="Charge relay system" evidence="1">
    <location>
        <position position="863"/>
    </location>
</feature>
<feature type="active site" description="Charge relay system" evidence="1">
    <location>
        <position position="896"/>
    </location>
</feature>
<feature type="glycosylation site" description="N-linked (GlcNAc...) asparagine" evidence="2">
    <location>
        <position position="377"/>
    </location>
</feature>
<feature type="glycosylation site" description="N-linked (GlcNAc...) asparagine" evidence="2">
    <location>
        <position position="814"/>
    </location>
</feature>
<dbReference type="EC" id="3.4.14.-"/>
<dbReference type="EMBL" id="L21944">
    <property type="protein sequence ID" value="AAA35119.1"/>
    <property type="molecule type" value="Genomic_DNA"/>
</dbReference>
<dbReference type="EMBL" id="U08230">
    <property type="protein sequence ID" value="AAA17897.1"/>
    <property type="molecule type" value="Unassigned_DNA"/>
</dbReference>
<dbReference type="EMBL" id="X92441">
    <property type="protein sequence ID" value="CAA63182.1"/>
    <property type="molecule type" value="Genomic_DNA"/>
</dbReference>
<dbReference type="EMBL" id="Z75127">
    <property type="protein sequence ID" value="CAA99437.1"/>
    <property type="molecule type" value="Genomic_DNA"/>
</dbReference>
<dbReference type="EMBL" id="BK006948">
    <property type="protein sequence ID" value="DAA10990.1"/>
    <property type="molecule type" value="Genomic_DNA"/>
</dbReference>
<dbReference type="PIR" id="A49737">
    <property type="entry name" value="A49737"/>
</dbReference>
<dbReference type="RefSeq" id="NP_014862.3">
    <property type="nucleotide sequence ID" value="NM_001183638.3"/>
</dbReference>
<dbReference type="SMR" id="P33894"/>
<dbReference type="BioGRID" id="34613">
    <property type="interactions" value="32"/>
</dbReference>
<dbReference type="DIP" id="DIP-2596N"/>
<dbReference type="FunCoup" id="P33894">
    <property type="interactions" value="391"/>
</dbReference>
<dbReference type="IntAct" id="P33894">
    <property type="interactions" value="4"/>
</dbReference>
<dbReference type="MINT" id="P33894"/>
<dbReference type="STRING" id="4932.YOR219C"/>
<dbReference type="ESTHER" id="yeast-dap1">
    <property type="family name" value="DPP4N_Peptidase_S9"/>
</dbReference>
<dbReference type="MEROPS" id="S09.005"/>
<dbReference type="GlyCosmos" id="P33894">
    <property type="glycosylation" value="2 sites, No reported glycans"/>
</dbReference>
<dbReference type="GlyGen" id="P33894">
    <property type="glycosylation" value="5 sites, 1 O-linked glycan (3 sites)"/>
</dbReference>
<dbReference type="iPTMnet" id="P33894"/>
<dbReference type="PaxDb" id="4932-YOR219C"/>
<dbReference type="PeptideAtlas" id="P33894"/>
<dbReference type="EnsemblFungi" id="YOR219C_mRNA">
    <property type="protein sequence ID" value="YOR219C"/>
    <property type="gene ID" value="YOR219C"/>
</dbReference>
<dbReference type="GeneID" id="854394"/>
<dbReference type="KEGG" id="sce:YOR219C"/>
<dbReference type="AGR" id="SGD:S000005745"/>
<dbReference type="SGD" id="S000005745">
    <property type="gene designation" value="STE13"/>
</dbReference>
<dbReference type="VEuPathDB" id="FungiDB:YOR219C"/>
<dbReference type="eggNOG" id="KOG2100">
    <property type="taxonomic scope" value="Eukaryota"/>
</dbReference>
<dbReference type="HOGENOM" id="CLU_006105_0_1_1"/>
<dbReference type="InParanoid" id="P33894"/>
<dbReference type="OMA" id="NYDMHIF"/>
<dbReference type="OrthoDB" id="16520at2759"/>
<dbReference type="BioCyc" id="YEAST:YOR219C-MONOMER"/>
<dbReference type="BioGRID-ORCS" id="854394">
    <property type="hits" value="1 hit in 10 CRISPR screens"/>
</dbReference>
<dbReference type="PRO" id="PR:P33894"/>
<dbReference type="Proteomes" id="UP000002311">
    <property type="component" value="Chromosome XV"/>
</dbReference>
<dbReference type="RNAct" id="P33894">
    <property type="molecule type" value="protein"/>
</dbReference>
<dbReference type="GO" id="GO:0005886">
    <property type="term" value="C:plasma membrane"/>
    <property type="evidence" value="ECO:0000318"/>
    <property type="project" value="GO_Central"/>
</dbReference>
<dbReference type="GO" id="GO:0005802">
    <property type="term" value="C:trans-Golgi network"/>
    <property type="evidence" value="ECO:0000314"/>
    <property type="project" value="SGD"/>
</dbReference>
<dbReference type="GO" id="GO:0005774">
    <property type="term" value="C:vacuolar membrane"/>
    <property type="evidence" value="ECO:0007669"/>
    <property type="project" value="UniProtKB-SubCell"/>
</dbReference>
<dbReference type="GO" id="GO:0004177">
    <property type="term" value="F:aminopeptidase activity"/>
    <property type="evidence" value="ECO:0000314"/>
    <property type="project" value="SGD"/>
</dbReference>
<dbReference type="GO" id="GO:0008239">
    <property type="term" value="F:dipeptidyl-peptidase activity"/>
    <property type="evidence" value="ECO:0000318"/>
    <property type="project" value="GO_Central"/>
</dbReference>
<dbReference type="GO" id="GO:0008236">
    <property type="term" value="F:serine-type peptidase activity"/>
    <property type="evidence" value="ECO:0007669"/>
    <property type="project" value="UniProtKB-KW"/>
</dbReference>
<dbReference type="GO" id="GO:0007323">
    <property type="term" value="P:peptide pheromone maturation"/>
    <property type="evidence" value="ECO:0000314"/>
    <property type="project" value="SGD"/>
</dbReference>
<dbReference type="GO" id="GO:0006508">
    <property type="term" value="P:proteolysis"/>
    <property type="evidence" value="ECO:0000318"/>
    <property type="project" value="GO_Central"/>
</dbReference>
<dbReference type="GO" id="GO:0019236">
    <property type="term" value="P:response to pheromone"/>
    <property type="evidence" value="ECO:0007669"/>
    <property type="project" value="UniProtKB-KW"/>
</dbReference>
<dbReference type="FunFam" id="2.140.10.30:FF:000006">
    <property type="entry name" value="Dipeptidyl aminopeptidase"/>
    <property type="match status" value="1"/>
</dbReference>
<dbReference type="FunFam" id="3.40.50.1820:FF:000003">
    <property type="entry name" value="Dipeptidyl peptidase 4"/>
    <property type="match status" value="1"/>
</dbReference>
<dbReference type="Gene3D" id="3.40.50.1820">
    <property type="entry name" value="alpha/beta hydrolase"/>
    <property type="match status" value="1"/>
</dbReference>
<dbReference type="Gene3D" id="2.140.10.30">
    <property type="entry name" value="Dipeptidylpeptidase IV, N-terminal domain"/>
    <property type="match status" value="1"/>
</dbReference>
<dbReference type="InterPro" id="IPR029058">
    <property type="entry name" value="AB_hydrolase_fold"/>
</dbReference>
<dbReference type="InterPro" id="IPR001375">
    <property type="entry name" value="Peptidase_S9_cat"/>
</dbReference>
<dbReference type="InterPro" id="IPR002469">
    <property type="entry name" value="Peptidase_S9B_N"/>
</dbReference>
<dbReference type="InterPro" id="IPR050278">
    <property type="entry name" value="Serine_Prot_S9B/DPPIV"/>
</dbReference>
<dbReference type="PANTHER" id="PTHR11731:SF160">
    <property type="entry name" value="DIPEPTIDYL AMINOPEPTIDASE A"/>
    <property type="match status" value="1"/>
</dbReference>
<dbReference type="PANTHER" id="PTHR11731">
    <property type="entry name" value="PROTEASE FAMILY S9B,C DIPEPTIDYL-PEPTIDASE IV-RELATED"/>
    <property type="match status" value="1"/>
</dbReference>
<dbReference type="Pfam" id="PF00930">
    <property type="entry name" value="DPPIV_N"/>
    <property type="match status" value="1"/>
</dbReference>
<dbReference type="Pfam" id="PF00326">
    <property type="entry name" value="Peptidase_S9"/>
    <property type="match status" value="1"/>
</dbReference>
<dbReference type="SUPFAM" id="SSF53474">
    <property type="entry name" value="alpha/beta-Hydrolases"/>
    <property type="match status" value="1"/>
</dbReference>
<dbReference type="SUPFAM" id="SSF82171">
    <property type="entry name" value="DPP6 N-terminal domain-like"/>
    <property type="match status" value="1"/>
</dbReference>
<sequence>MSASTHSHKRKNSHLFPQRKSSNSSMDKPFFPNNDSVANTDPQSNENGHTINEIRPTEATIDVTDVPQTPFLQEQYSMRPRRESFQFNDIENQHHTHSFFSVNKFNRRWGEWSLPEKRSYVLVFTLIALSVLVLLVILIPSKLLPTKITRPKTSAGDSSLGKRSFSIENVLNGDFAIPEDTFHFIDPPQRLLGQDSDPGLYFTTKEIDGHTNFIAKQLFDETFEVNLGGNRFLYEGVEFTVSTVQINYKLDKLIFGTNLESEFRHSSKGFYWIKDLNTGNIEPILPPEKSDDNYELGLSKLSYAHFSPAYNYIYFVYENNLFLQQVNSGVAKKVTEDGSKDIFNAKPDWIYEEEVLASDQAIWWAPDDSKAVFARFNDTSVDDIRLNRYTNMNEAYLSDTKIKYPKPGFQNPQFDLFLVNLQNGIIYSINTGGQKDSILYNGKWISPDTFRFEITDRNSKILDVKVYDIPSSQMLTVRNTNSNLFNGWIEKTKDILSIPPKPELKRMDYGYIDIHADSRGFSHLFYYPTVFAKEPIQLTKGNWEVTGNGIVGYEYETDTIFFTANEIGVMSQHLYSISLTDSTTQNTFQSLQNPSDKYDFYDFELSSSARYAISKKLGPDTPIKVAGPLTRVLNVAEIHDDSILQLTKDEKFKEKIKNYDLPITSYKTMVLDDGVEINYIEIKPANLNPKKKYPILVNIYGGPGSQTFTTKSSLAFEQAVVSGLDVIVLQIEPRGTGGKGWSFRSWAREKLGYWEPRDITEVTKKFIQRNSQHIDESKIAIWGWSYGGFTSLKTVELDNGDTFKYAMAVAPVTNWTLYDSVYTERYMNQPSENHEGYFEVSTIQNFKSFESLKRLFIVHGTFDDNVHIQNTFRLVDQLNLLGLTNYDMHIFPDSDHSIRYHNAQRIVFQKLYYWLRDAFAERFDNTEVLHL</sequence>
<proteinExistence type="evidence at protein level"/>
<organism>
    <name type="scientific">Saccharomyces cerevisiae (strain ATCC 204508 / S288c)</name>
    <name type="common">Baker's yeast</name>
    <dbReference type="NCBI Taxonomy" id="559292"/>
    <lineage>
        <taxon>Eukaryota</taxon>
        <taxon>Fungi</taxon>
        <taxon>Dikarya</taxon>
        <taxon>Ascomycota</taxon>
        <taxon>Saccharomycotina</taxon>
        <taxon>Saccharomycetes</taxon>
        <taxon>Saccharomycetales</taxon>
        <taxon>Saccharomycetaceae</taxon>
        <taxon>Saccharomyces</taxon>
    </lineage>
</organism>
<protein>
    <recommendedName>
        <fullName>Dipeptidyl aminopeptidase A</fullName>
        <shortName>DPAP A</shortName>
        <ecNumber>3.4.14.-</ecNumber>
    </recommendedName>
    <alternativeName>
        <fullName>YSCIV</fullName>
    </alternativeName>
</protein>
<name>STE13_YEAST</name>
<keyword id="KW-0031">Aminopeptidase</keyword>
<keyword id="KW-0325">Glycoprotein</keyword>
<keyword id="KW-0378">Hydrolase</keyword>
<keyword id="KW-0472">Membrane</keyword>
<keyword id="KW-0589">Pheromone response</keyword>
<keyword id="KW-0645">Protease</keyword>
<keyword id="KW-1185">Reference proteome</keyword>
<keyword id="KW-0720">Serine protease</keyword>
<keyword id="KW-0735">Signal-anchor</keyword>
<keyword id="KW-0812">Transmembrane</keyword>
<keyword id="KW-1133">Transmembrane helix</keyword>
<keyword id="KW-0926">Vacuole</keyword>
<evidence type="ECO:0000250" key="1"/>
<evidence type="ECO:0000255" key="2"/>
<evidence type="ECO:0000256" key="3">
    <source>
        <dbReference type="SAM" id="MobiDB-lite"/>
    </source>
</evidence>
<evidence type="ECO:0000305" key="4"/>